<name>RECA_JANMA</name>
<protein>
    <recommendedName>
        <fullName evidence="1">Protein RecA</fullName>
    </recommendedName>
    <alternativeName>
        <fullName evidence="1">Recombinase A</fullName>
    </alternativeName>
</protein>
<gene>
    <name evidence="1" type="primary">recA</name>
    <name type="ordered locus">mma_2861</name>
</gene>
<feature type="chain" id="PRO_1000047934" description="Protein RecA">
    <location>
        <begin position="1"/>
        <end position="367"/>
    </location>
</feature>
<feature type="region of interest" description="Disordered" evidence="2">
    <location>
        <begin position="345"/>
        <end position="367"/>
    </location>
</feature>
<feature type="binding site" evidence="1">
    <location>
        <begin position="73"/>
        <end position="80"/>
    </location>
    <ligand>
        <name>ATP</name>
        <dbReference type="ChEBI" id="CHEBI:30616"/>
    </ligand>
</feature>
<reference key="1">
    <citation type="journal article" date="2007" name="PLoS Genet.">
        <title>Genome analysis of Minibacterium massiliensis highlights the convergent evolution of water-living bacteria.</title>
        <authorList>
            <person name="Audic S."/>
            <person name="Robert C."/>
            <person name="Campagna B."/>
            <person name="Parinello H."/>
            <person name="Claverie J.-M."/>
            <person name="Raoult D."/>
            <person name="Drancourt M."/>
        </authorList>
    </citation>
    <scope>NUCLEOTIDE SEQUENCE [LARGE SCALE GENOMIC DNA]</scope>
    <source>
        <strain>Marseille</strain>
    </source>
</reference>
<accession>A6T204</accession>
<proteinExistence type="inferred from homology"/>
<sequence>MDDKKNAPSSDKSKALAAALAQIEKQFGKGSVMRMEDGAVVEEVQVVSTGSLGLDIALGVGGLPRGRVVEIYGPESSGKTTLTLQTIAEMQKLGGTCAFIDAEHALDVTYAQKLGINLSDLLISQPDTGEQALEICDALVRSGGVDLIVIDSVAALTPRAEIEGDMGDSLPGLQARLMSQALRKLTGSINRTNTLVIFINQIRMKIGVMFGNPETTTGGNALKFYASVRLDIRRTGSIKSGDEVIGNETKVKVVKNKIAPPFKEAHFDILYGEGTSREGEILDLGSDAKIVEKSGAWYSYNGERIGQGKDNARNYLKERPDLAREIENKVRVSLGVPELGAIKSDEPVAKKASAKESKEAKELKEVE</sequence>
<dbReference type="EMBL" id="CP000269">
    <property type="protein sequence ID" value="ABR88805.1"/>
    <property type="molecule type" value="Genomic_DNA"/>
</dbReference>
<dbReference type="RefSeq" id="WP_012080710.1">
    <property type="nucleotide sequence ID" value="NC_009659.1"/>
</dbReference>
<dbReference type="SMR" id="A6T204"/>
<dbReference type="STRING" id="375286.mma_2861"/>
<dbReference type="KEGG" id="mms:mma_2861"/>
<dbReference type="eggNOG" id="COG0468">
    <property type="taxonomic scope" value="Bacteria"/>
</dbReference>
<dbReference type="HOGENOM" id="CLU_040469_3_2_4"/>
<dbReference type="OrthoDB" id="9776733at2"/>
<dbReference type="Proteomes" id="UP000006388">
    <property type="component" value="Chromosome"/>
</dbReference>
<dbReference type="GO" id="GO:0005829">
    <property type="term" value="C:cytosol"/>
    <property type="evidence" value="ECO:0007669"/>
    <property type="project" value="TreeGrafter"/>
</dbReference>
<dbReference type="GO" id="GO:0005524">
    <property type="term" value="F:ATP binding"/>
    <property type="evidence" value="ECO:0007669"/>
    <property type="project" value="UniProtKB-UniRule"/>
</dbReference>
<dbReference type="GO" id="GO:0016887">
    <property type="term" value="F:ATP hydrolysis activity"/>
    <property type="evidence" value="ECO:0007669"/>
    <property type="project" value="InterPro"/>
</dbReference>
<dbReference type="GO" id="GO:0140664">
    <property type="term" value="F:ATP-dependent DNA damage sensor activity"/>
    <property type="evidence" value="ECO:0007669"/>
    <property type="project" value="InterPro"/>
</dbReference>
<dbReference type="GO" id="GO:0003684">
    <property type="term" value="F:damaged DNA binding"/>
    <property type="evidence" value="ECO:0007669"/>
    <property type="project" value="UniProtKB-UniRule"/>
</dbReference>
<dbReference type="GO" id="GO:0003697">
    <property type="term" value="F:single-stranded DNA binding"/>
    <property type="evidence" value="ECO:0007669"/>
    <property type="project" value="UniProtKB-UniRule"/>
</dbReference>
<dbReference type="GO" id="GO:0006310">
    <property type="term" value="P:DNA recombination"/>
    <property type="evidence" value="ECO:0007669"/>
    <property type="project" value="UniProtKB-UniRule"/>
</dbReference>
<dbReference type="GO" id="GO:0006281">
    <property type="term" value="P:DNA repair"/>
    <property type="evidence" value="ECO:0007669"/>
    <property type="project" value="UniProtKB-UniRule"/>
</dbReference>
<dbReference type="GO" id="GO:0009432">
    <property type="term" value="P:SOS response"/>
    <property type="evidence" value="ECO:0007669"/>
    <property type="project" value="UniProtKB-UniRule"/>
</dbReference>
<dbReference type="CDD" id="cd00983">
    <property type="entry name" value="RecA"/>
    <property type="match status" value="1"/>
</dbReference>
<dbReference type="FunFam" id="3.40.50.300:FF:000087">
    <property type="entry name" value="Recombinase RecA"/>
    <property type="match status" value="1"/>
</dbReference>
<dbReference type="Gene3D" id="3.40.50.300">
    <property type="entry name" value="P-loop containing nucleotide triphosphate hydrolases"/>
    <property type="match status" value="1"/>
</dbReference>
<dbReference type="HAMAP" id="MF_00268">
    <property type="entry name" value="RecA"/>
    <property type="match status" value="1"/>
</dbReference>
<dbReference type="InterPro" id="IPR003593">
    <property type="entry name" value="AAA+_ATPase"/>
</dbReference>
<dbReference type="InterPro" id="IPR013765">
    <property type="entry name" value="DNA_recomb/repair_RecA"/>
</dbReference>
<dbReference type="InterPro" id="IPR020584">
    <property type="entry name" value="DNA_recomb/repair_RecA_CS"/>
</dbReference>
<dbReference type="InterPro" id="IPR027417">
    <property type="entry name" value="P-loop_NTPase"/>
</dbReference>
<dbReference type="InterPro" id="IPR049261">
    <property type="entry name" value="RecA-like_C"/>
</dbReference>
<dbReference type="InterPro" id="IPR049428">
    <property type="entry name" value="RecA-like_N"/>
</dbReference>
<dbReference type="InterPro" id="IPR020588">
    <property type="entry name" value="RecA_ATP-bd"/>
</dbReference>
<dbReference type="InterPro" id="IPR023400">
    <property type="entry name" value="RecA_C_sf"/>
</dbReference>
<dbReference type="InterPro" id="IPR020587">
    <property type="entry name" value="RecA_monomer-monomer_interface"/>
</dbReference>
<dbReference type="NCBIfam" id="TIGR02012">
    <property type="entry name" value="tigrfam_recA"/>
    <property type="match status" value="1"/>
</dbReference>
<dbReference type="PANTHER" id="PTHR45900:SF1">
    <property type="entry name" value="MITOCHONDRIAL DNA REPAIR PROTEIN RECA HOMOLOG-RELATED"/>
    <property type="match status" value="1"/>
</dbReference>
<dbReference type="PANTHER" id="PTHR45900">
    <property type="entry name" value="RECA"/>
    <property type="match status" value="1"/>
</dbReference>
<dbReference type="Pfam" id="PF00154">
    <property type="entry name" value="RecA"/>
    <property type="match status" value="1"/>
</dbReference>
<dbReference type="Pfam" id="PF21096">
    <property type="entry name" value="RecA_C"/>
    <property type="match status" value="1"/>
</dbReference>
<dbReference type="PRINTS" id="PR00142">
    <property type="entry name" value="RECA"/>
</dbReference>
<dbReference type="SMART" id="SM00382">
    <property type="entry name" value="AAA"/>
    <property type="match status" value="1"/>
</dbReference>
<dbReference type="SUPFAM" id="SSF52540">
    <property type="entry name" value="P-loop containing nucleoside triphosphate hydrolases"/>
    <property type="match status" value="1"/>
</dbReference>
<dbReference type="SUPFAM" id="SSF54752">
    <property type="entry name" value="RecA protein, C-terminal domain"/>
    <property type="match status" value="1"/>
</dbReference>
<dbReference type="PROSITE" id="PS00321">
    <property type="entry name" value="RECA_1"/>
    <property type="match status" value="1"/>
</dbReference>
<dbReference type="PROSITE" id="PS50162">
    <property type="entry name" value="RECA_2"/>
    <property type="match status" value="1"/>
</dbReference>
<dbReference type="PROSITE" id="PS50163">
    <property type="entry name" value="RECA_3"/>
    <property type="match status" value="1"/>
</dbReference>
<evidence type="ECO:0000255" key="1">
    <source>
        <dbReference type="HAMAP-Rule" id="MF_00268"/>
    </source>
</evidence>
<evidence type="ECO:0000256" key="2">
    <source>
        <dbReference type="SAM" id="MobiDB-lite"/>
    </source>
</evidence>
<keyword id="KW-0067">ATP-binding</keyword>
<keyword id="KW-0963">Cytoplasm</keyword>
<keyword id="KW-0227">DNA damage</keyword>
<keyword id="KW-0233">DNA recombination</keyword>
<keyword id="KW-0234">DNA repair</keyword>
<keyword id="KW-0238">DNA-binding</keyword>
<keyword id="KW-0547">Nucleotide-binding</keyword>
<keyword id="KW-0742">SOS response</keyword>
<comment type="function">
    <text evidence="1">Can catalyze the hydrolysis of ATP in the presence of single-stranded DNA, the ATP-dependent uptake of single-stranded DNA by duplex DNA, and the ATP-dependent hybridization of homologous single-stranded DNAs. It interacts with LexA causing its activation and leading to its autocatalytic cleavage.</text>
</comment>
<comment type="subcellular location">
    <subcellularLocation>
        <location evidence="1">Cytoplasm</location>
    </subcellularLocation>
</comment>
<comment type="similarity">
    <text evidence="1">Belongs to the RecA family.</text>
</comment>
<organism>
    <name type="scientific">Janthinobacterium sp. (strain Marseille)</name>
    <name type="common">Minibacterium massiliensis</name>
    <dbReference type="NCBI Taxonomy" id="375286"/>
    <lineage>
        <taxon>Bacteria</taxon>
        <taxon>Pseudomonadati</taxon>
        <taxon>Pseudomonadota</taxon>
        <taxon>Betaproteobacteria</taxon>
        <taxon>Burkholderiales</taxon>
        <taxon>Oxalobacteraceae</taxon>
        <taxon>Janthinobacterium</taxon>
    </lineage>
</organism>